<keyword id="KW-0028">Amino-acid biosynthesis</keyword>
<keyword id="KW-0057">Aromatic amino acid biosynthesis</keyword>
<keyword id="KW-0170">Cobalt</keyword>
<keyword id="KW-0963">Cytoplasm</keyword>
<keyword id="KW-0456">Lyase</keyword>
<keyword id="KW-0479">Metal-binding</keyword>
<keyword id="KW-0520">NAD</keyword>
<keyword id="KW-0547">Nucleotide-binding</keyword>
<keyword id="KW-0862">Zinc</keyword>
<reference key="1">
    <citation type="journal article" date="2006" name="PLoS Biol.">
        <title>The genome of deep-sea vent chemolithoautotroph Thiomicrospira crunogena XCL-2.</title>
        <authorList>
            <person name="Scott K.M."/>
            <person name="Sievert S.M."/>
            <person name="Abril F.N."/>
            <person name="Ball L.A."/>
            <person name="Barrett C.J."/>
            <person name="Blake R.A."/>
            <person name="Boller A.J."/>
            <person name="Chain P.S.G."/>
            <person name="Clark J.A."/>
            <person name="Davis C.R."/>
            <person name="Detter C."/>
            <person name="Do K.F."/>
            <person name="Dobrinski K.P."/>
            <person name="Faza B.I."/>
            <person name="Fitzpatrick K.A."/>
            <person name="Freyermuth S.K."/>
            <person name="Harmer T.L."/>
            <person name="Hauser L.J."/>
            <person name="Huegler M."/>
            <person name="Kerfeld C.A."/>
            <person name="Klotz M.G."/>
            <person name="Kong W.W."/>
            <person name="Land M."/>
            <person name="Lapidus A."/>
            <person name="Larimer F.W."/>
            <person name="Longo D.L."/>
            <person name="Lucas S."/>
            <person name="Malfatti S.A."/>
            <person name="Massey S.E."/>
            <person name="Martin D.D."/>
            <person name="McCuddin Z."/>
            <person name="Meyer F."/>
            <person name="Moore J.L."/>
            <person name="Ocampo L.H. Jr."/>
            <person name="Paul J.H."/>
            <person name="Paulsen I.T."/>
            <person name="Reep D.K."/>
            <person name="Ren Q."/>
            <person name="Ross R.L."/>
            <person name="Sato P.Y."/>
            <person name="Thomas P."/>
            <person name="Tinkham L.E."/>
            <person name="Zeruth G.T."/>
        </authorList>
    </citation>
    <scope>NUCLEOTIDE SEQUENCE [LARGE SCALE GENOMIC DNA]</scope>
    <source>
        <strain>DSM 25203 / XCL-2</strain>
    </source>
</reference>
<name>AROB_HYDCU</name>
<comment type="function">
    <text evidence="1">Catalyzes the conversion of 3-deoxy-D-arabino-heptulosonate 7-phosphate (DAHP) to dehydroquinate (DHQ).</text>
</comment>
<comment type="catalytic activity">
    <reaction evidence="1">
        <text>7-phospho-2-dehydro-3-deoxy-D-arabino-heptonate = 3-dehydroquinate + phosphate</text>
        <dbReference type="Rhea" id="RHEA:21968"/>
        <dbReference type="ChEBI" id="CHEBI:32364"/>
        <dbReference type="ChEBI" id="CHEBI:43474"/>
        <dbReference type="ChEBI" id="CHEBI:58394"/>
        <dbReference type="EC" id="4.2.3.4"/>
    </reaction>
</comment>
<comment type="cofactor">
    <cofactor evidence="1">
        <name>Co(2+)</name>
        <dbReference type="ChEBI" id="CHEBI:48828"/>
    </cofactor>
    <cofactor evidence="1">
        <name>Zn(2+)</name>
        <dbReference type="ChEBI" id="CHEBI:29105"/>
    </cofactor>
    <text evidence="1">Binds 1 divalent metal cation per subunit. Can use either Co(2+) or Zn(2+).</text>
</comment>
<comment type="cofactor">
    <cofactor evidence="1">
        <name>NAD(+)</name>
        <dbReference type="ChEBI" id="CHEBI:57540"/>
    </cofactor>
</comment>
<comment type="pathway">
    <text evidence="1">Metabolic intermediate biosynthesis; chorismate biosynthesis; chorismate from D-erythrose 4-phosphate and phosphoenolpyruvate: step 2/7.</text>
</comment>
<comment type="subcellular location">
    <subcellularLocation>
        <location evidence="1">Cytoplasm</location>
    </subcellularLocation>
</comment>
<comment type="similarity">
    <text evidence="1">Belongs to the sugar phosphate cyclases superfamily. Dehydroquinate synthase family.</text>
</comment>
<protein>
    <recommendedName>
        <fullName evidence="1">3-dehydroquinate synthase</fullName>
        <shortName evidence="1">DHQS</shortName>
        <ecNumber evidence="1">4.2.3.4</ecNumber>
    </recommendedName>
</protein>
<gene>
    <name evidence="1" type="primary">aroB</name>
    <name type="ordered locus">Tcr_2136</name>
</gene>
<accession>Q31DP9</accession>
<dbReference type="EC" id="4.2.3.4" evidence="1"/>
<dbReference type="EMBL" id="CP000109">
    <property type="protein sequence ID" value="ABB42724.1"/>
    <property type="molecule type" value="Genomic_DNA"/>
</dbReference>
<dbReference type="SMR" id="Q31DP9"/>
<dbReference type="STRING" id="317025.Tcr_2136"/>
<dbReference type="KEGG" id="tcx:Tcr_2136"/>
<dbReference type="eggNOG" id="COG0337">
    <property type="taxonomic scope" value="Bacteria"/>
</dbReference>
<dbReference type="HOGENOM" id="CLU_001201_0_2_6"/>
<dbReference type="OrthoDB" id="9806583at2"/>
<dbReference type="UniPathway" id="UPA00053">
    <property type="reaction ID" value="UER00085"/>
</dbReference>
<dbReference type="GO" id="GO:0005737">
    <property type="term" value="C:cytoplasm"/>
    <property type="evidence" value="ECO:0007669"/>
    <property type="project" value="UniProtKB-SubCell"/>
</dbReference>
<dbReference type="GO" id="GO:0003856">
    <property type="term" value="F:3-dehydroquinate synthase activity"/>
    <property type="evidence" value="ECO:0007669"/>
    <property type="project" value="UniProtKB-UniRule"/>
</dbReference>
<dbReference type="GO" id="GO:0046872">
    <property type="term" value="F:metal ion binding"/>
    <property type="evidence" value="ECO:0007669"/>
    <property type="project" value="UniProtKB-KW"/>
</dbReference>
<dbReference type="GO" id="GO:0000166">
    <property type="term" value="F:nucleotide binding"/>
    <property type="evidence" value="ECO:0007669"/>
    <property type="project" value="UniProtKB-KW"/>
</dbReference>
<dbReference type="GO" id="GO:0008652">
    <property type="term" value="P:amino acid biosynthetic process"/>
    <property type="evidence" value="ECO:0007669"/>
    <property type="project" value="UniProtKB-KW"/>
</dbReference>
<dbReference type="GO" id="GO:0009073">
    <property type="term" value="P:aromatic amino acid family biosynthetic process"/>
    <property type="evidence" value="ECO:0007669"/>
    <property type="project" value="UniProtKB-KW"/>
</dbReference>
<dbReference type="GO" id="GO:0009423">
    <property type="term" value="P:chorismate biosynthetic process"/>
    <property type="evidence" value="ECO:0007669"/>
    <property type="project" value="UniProtKB-UniRule"/>
</dbReference>
<dbReference type="CDD" id="cd08195">
    <property type="entry name" value="DHQS"/>
    <property type="match status" value="1"/>
</dbReference>
<dbReference type="FunFam" id="1.20.1090.10:FF:000002">
    <property type="entry name" value="3-dehydroquinate synthase"/>
    <property type="match status" value="1"/>
</dbReference>
<dbReference type="FunFam" id="3.40.50.1970:FF:000001">
    <property type="entry name" value="3-dehydroquinate synthase"/>
    <property type="match status" value="1"/>
</dbReference>
<dbReference type="Gene3D" id="3.40.50.1970">
    <property type="match status" value="1"/>
</dbReference>
<dbReference type="Gene3D" id="1.20.1090.10">
    <property type="entry name" value="Dehydroquinate synthase-like - alpha domain"/>
    <property type="match status" value="1"/>
</dbReference>
<dbReference type="HAMAP" id="MF_00110">
    <property type="entry name" value="DHQ_synthase"/>
    <property type="match status" value="1"/>
</dbReference>
<dbReference type="InterPro" id="IPR050071">
    <property type="entry name" value="Dehydroquinate_synthase"/>
</dbReference>
<dbReference type="InterPro" id="IPR016037">
    <property type="entry name" value="DHQ_synth_AroB"/>
</dbReference>
<dbReference type="InterPro" id="IPR030963">
    <property type="entry name" value="DHQ_synth_fam"/>
</dbReference>
<dbReference type="InterPro" id="IPR030960">
    <property type="entry name" value="DHQS/DOIS_N"/>
</dbReference>
<dbReference type="InterPro" id="IPR056179">
    <property type="entry name" value="DHQS_C"/>
</dbReference>
<dbReference type="NCBIfam" id="TIGR01357">
    <property type="entry name" value="aroB"/>
    <property type="match status" value="1"/>
</dbReference>
<dbReference type="PANTHER" id="PTHR43622">
    <property type="entry name" value="3-DEHYDROQUINATE SYNTHASE"/>
    <property type="match status" value="1"/>
</dbReference>
<dbReference type="PANTHER" id="PTHR43622:SF7">
    <property type="entry name" value="3-DEHYDROQUINATE SYNTHASE, CHLOROPLASTIC"/>
    <property type="match status" value="1"/>
</dbReference>
<dbReference type="Pfam" id="PF01761">
    <property type="entry name" value="DHQ_synthase"/>
    <property type="match status" value="1"/>
</dbReference>
<dbReference type="Pfam" id="PF24621">
    <property type="entry name" value="DHQS_C"/>
    <property type="match status" value="1"/>
</dbReference>
<dbReference type="PIRSF" id="PIRSF001455">
    <property type="entry name" value="DHQ_synth"/>
    <property type="match status" value="1"/>
</dbReference>
<dbReference type="SUPFAM" id="SSF56796">
    <property type="entry name" value="Dehydroquinate synthase-like"/>
    <property type="match status" value="1"/>
</dbReference>
<feature type="chain" id="PRO_0000231140" description="3-dehydroquinate synthase">
    <location>
        <begin position="1"/>
        <end position="358"/>
    </location>
</feature>
<feature type="binding site" evidence="1">
    <location>
        <begin position="69"/>
        <end position="74"/>
    </location>
    <ligand>
        <name>NAD(+)</name>
        <dbReference type="ChEBI" id="CHEBI:57540"/>
    </ligand>
</feature>
<feature type="binding site" evidence="1">
    <location>
        <begin position="103"/>
        <end position="107"/>
    </location>
    <ligand>
        <name>NAD(+)</name>
        <dbReference type="ChEBI" id="CHEBI:57540"/>
    </ligand>
</feature>
<feature type="binding site" evidence="1">
    <location>
        <begin position="127"/>
        <end position="128"/>
    </location>
    <ligand>
        <name>NAD(+)</name>
        <dbReference type="ChEBI" id="CHEBI:57540"/>
    </ligand>
</feature>
<feature type="binding site" evidence="1">
    <location>
        <position position="140"/>
    </location>
    <ligand>
        <name>NAD(+)</name>
        <dbReference type="ChEBI" id="CHEBI:57540"/>
    </ligand>
</feature>
<feature type="binding site" evidence="1">
    <location>
        <position position="149"/>
    </location>
    <ligand>
        <name>NAD(+)</name>
        <dbReference type="ChEBI" id="CHEBI:57540"/>
    </ligand>
</feature>
<feature type="binding site" evidence="1">
    <location>
        <begin position="167"/>
        <end position="170"/>
    </location>
    <ligand>
        <name>NAD(+)</name>
        <dbReference type="ChEBI" id="CHEBI:57540"/>
    </ligand>
</feature>
<feature type="binding site" evidence="1">
    <location>
        <position position="182"/>
    </location>
    <ligand>
        <name>Zn(2+)</name>
        <dbReference type="ChEBI" id="CHEBI:29105"/>
    </ligand>
</feature>
<feature type="binding site" evidence="1">
    <location>
        <position position="245"/>
    </location>
    <ligand>
        <name>Zn(2+)</name>
        <dbReference type="ChEBI" id="CHEBI:29105"/>
    </ligand>
</feature>
<feature type="binding site" evidence="1">
    <location>
        <position position="262"/>
    </location>
    <ligand>
        <name>Zn(2+)</name>
        <dbReference type="ChEBI" id="CHEBI:29105"/>
    </ligand>
</feature>
<proteinExistence type="inferred from homology"/>
<sequence>MKTLTVELGERSYPIFIGQGLLGQAELFKPYVTGTQVLIVSNTTVAPLYLEKAKQAFSGYDVKTVILPDGEQYKNLDVLNQIFDVAIENRFDRKCTFVALGGGVIGDMTGFAAASYQRGVNFIQIPTTLLSQVDSSVGGKTGVNHPKGKNMIGAFHQPECVVIDTDTLNTLEDRELSAGLAEVIKYGLIVDYPFFEWLEQNLPGLLARDPVVLAEAIERSCQNKATIVAKDEKEAGLRALFNLGHTFGHAIEAGMGYGNWLHGEGVSAGMMQAVYLSKLMGDLTQTDQKRIAAILQSAHLPVMPPKEMSVQQFLDLMAGDKKVQAGQIRLVLLKAIGQAYVTGDYPAELLERTLIEYR</sequence>
<evidence type="ECO:0000255" key="1">
    <source>
        <dbReference type="HAMAP-Rule" id="MF_00110"/>
    </source>
</evidence>
<organism>
    <name type="scientific">Hydrogenovibrio crunogenus (strain DSM 25203 / XCL-2)</name>
    <name type="common">Thiomicrospira crunogena</name>
    <dbReference type="NCBI Taxonomy" id="317025"/>
    <lineage>
        <taxon>Bacteria</taxon>
        <taxon>Pseudomonadati</taxon>
        <taxon>Pseudomonadota</taxon>
        <taxon>Gammaproteobacteria</taxon>
        <taxon>Thiotrichales</taxon>
        <taxon>Piscirickettsiaceae</taxon>
        <taxon>Hydrogenovibrio</taxon>
    </lineage>
</organism>